<evidence type="ECO:0000250" key="1"/>
<evidence type="ECO:0000250" key="2">
    <source>
        <dbReference type="UniProtKB" id="Q8IWJ2"/>
    </source>
</evidence>
<evidence type="ECO:0000255" key="3"/>
<evidence type="ECO:0000255" key="4">
    <source>
        <dbReference type="PROSITE-ProRule" id="PRU00250"/>
    </source>
</evidence>
<evidence type="ECO:0000256" key="5">
    <source>
        <dbReference type="SAM" id="MobiDB-lite"/>
    </source>
</evidence>
<evidence type="ECO:0000269" key="6">
    <source>
    </source>
</evidence>
<comment type="function">
    <text evidence="1">Golgin which probably tethers transport vesicles to the trans-Golgi network (TGN) and regulates vesicular transport between the endosomes and the Golgi. As a RAB9A effector it is involved in recycling of the mannose 6-phosphate receptor from the late endosomes to the TGN. May also play a role in transport between the recycling endosomes and the Golgi. Required for maintenance of the Golgi structure, it is involved in the biogenesis of noncentrosomal, Golgi-associated microtubules through recruitment of CLASP1 and CLASP2 (By similarity).</text>
</comment>
<comment type="subunit">
    <text evidence="1 6">Homodimer. Interacts (via GRIP domain) with RAB6A (preferentially in its GTP-bound form). May interact (RAB6A-dependent) with ARL1; might be involved in GCC2 Golgi localization. Interacts with CLASP1 and CLASP2; recruits both proteins to membranes of the TGN. Interacts with STX16 (By similarity). Interacts (probably via GRIP domain) with RAB9A (preferentially in its GTP-bound form).</text>
</comment>
<comment type="subcellular location">
    <subcellularLocation>
        <location evidence="1">Cytoplasm</location>
    </subcellularLocation>
    <subcellularLocation>
        <location evidence="1">Golgi apparatus</location>
        <location evidence="1">trans-Golgi network membrane</location>
        <topology evidence="1">Peripheral membrane protein</topology>
    </subcellularLocation>
</comment>
<comment type="domain">
    <text>Extended rod-like protein with coiled-coil domains.</text>
</comment>
<organism>
    <name type="scientific">Rattus norvegicus</name>
    <name type="common">Rat</name>
    <dbReference type="NCBI Taxonomy" id="10116"/>
    <lineage>
        <taxon>Eukaryota</taxon>
        <taxon>Metazoa</taxon>
        <taxon>Chordata</taxon>
        <taxon>Craniata</taxon>
        <taxon>Vertebrata</taxon>
        <taxon>Euteleostomi</taxon>
        <taxon>Mammalia</taxon>
        <taxon>Eutheria</taxon>
        <taxon>Euarchontoglires</taxon>
        <taxon>Glires</taxon>
        <taxon>Rodentia</taxon>
        <taxon>Myomorpha</taxon>
        <taxon>Muroidea</taxon>
        <taxon>Muridae</taxon>
        <taxon>Murinae</taxon>
        <taxon>Rattus</taxon>
    </lineage>
</organism>
<accession>D3ZZL9</accession>
<reference key="1">
    <citation type="journal article" date="2004" name="Nature">
        <title>Genome sequence of the Brown Norway rat yields insights into mammalian evolution.</title>
        <authorList>
            <person name="Gibbs R.A."/>
            <person name="Weinstock G.M."/>
            <person name="Metzker M.L."/>
            <person name="Muzny D.M."/>
            <person name="Sodergren E.J."/>
            <person name="Scherer S."/>
            <person name="Scott G."/>
            <person name="Steffen D."/>
            <person name="Worley K.C."/>
            <person name="Burch P.E."/>
            <person name="Okwuonu G."/>
            <person name="Hines S."/>
            <person name="Lewis L."/>
            <person name="Deramo C."/>
            <person name="Delgado O."/>
            <person name="Dugan-Rocha S."/>
            <person name="Miner G."/>
            <person name="Morgan M."/>
            <person name="Hawes A."/>
            <person name="Gill R."/>
            <person name="Holt R.A."/>
            <person name="Adams M.D."/>
            <person name="Amanatides P.G."/>
            <person name="Baden-Tillson H."/>
            <person name="Barnstead M."/>
            <person name="Chin S."/>
            <person name="Evans C.A."/>
            <person name="Ferriera S."/>
            <person name="Fosler C."/>
            <person name="Glodek A."/>
            <person name="Gu Z."/>
            <person name="Jennings D."/>
            <person name="Kraft C.L."/>
            <person name="Nguyen T."/>
            <person name="Pfannkoch C.M."/>
            <person name="Sitter C."/>
            <person name="Sutton G.G."/>
            <person name="Venter J.C."/>
            <person name="Woodage T."/>
            <person name="Smith D."/>
            <person name="Lee H.-M."/>
            <person name="Gustafson E."/>
            <person name="Cahill P."/>
            <person name="Kana A."/>
            <person name="Doucette-Stamm L."/>
            <person name="Weinstock K."/>
            <person name="Fechtel K."/>
            <person name="Weiss R.B."/>
            <person name="Dunn D.M."/>
            <person name="Green E.D."/>
            <person name="Blakesley R.W."/>
            <person name="Bouffard G.G."/>
            <person name="De Jong P.J."/>
            <person name="Osoegawa K."/>
            <person name="Zhu B."/>
            <person name="Marra M."/>
            <person name="Schein J."/>
            <person name="Bosdet I."/>
            <person name="Fjell C."/>
            <person name="Jones S."/>
            <person name="Krzywinski M."/>
            <person name="Mathewson C."/>
            <person name="Siddiqui A."/>
            <person name="Wye N."/>
            <person name="McPherson J."/>
            <person name="Zhao S."/>
            <person name="Fraser C.M."/>
            <person name="Shetty J."/>
            <person name="Shatsman S."/>
            <person name="Geer K."/>
            <person name="Chen Y."/>
            <person name="Abramzon S."/>
            <person name="Nierman W.C."/>
            <person name="Havlak P.H."/>
            <person name="Chen R."/>
            <person name="Durbin K.J."/>
            <person name="Egan A."/>
            <person name="Ren Y."/>
            <person name="Song X.-Z."/>
            <person name="Li B."/>
            <person name="Liu Y."/>
            <person name="Qin X."/>
            <person name="Cawley S."/>
            <person name="Cooney A.J."/>
            <person name="D'Souza L.M."/>
            <person name="Martin K."/>
            <person name="Wu J.Q."/>
            <person name="Gonzalez-Garay M.L."/>
            <person name="Jackson A.R."/>
            <person name="Kalafus K.J."/>
            <person name="McLeod M.P."/>
            <person name="Milosavljevic A."/>
            <person name="Virk D."/>
            <person name="Volkov A."/>
            <person name="Wheeler D.A."/>
            <person name="Zhang Z."/>
            <person name="Bailey J.A."/>
            <person name="Eichler E.E."/>
            <person name="Tuzun E."/>
            <person name="Birney E."/>
            <person name="Mongin E."/>
            <person name="Ureta-Vidal A."/>
            <person name="Woodwark C."/>
            <person name="Zdobnov E."/>
            <person name="Bork P."/>
            <person name="Suyama M."/>
            <person name="Torrents D."/>
            <person name="Alexandersson M."/>
            <person name="Trask B.J."/>
            <person name="Young J.M."/>
            <person name="Huang H."/>
            <person name="Wang H."/>
            <person name="Xing H."/>
            <person name="Daniels S."/>
            <person name="Gietzen D."/>
            <person name="Schmidt J."/>
            <person name="Stevens K."/>
            <person name="Vitt U."/>
            <person name="Wingrove J."/>
            <person name="Camara F."/>
            <person name="Mar Alba M."/>
            <person name="Abril J.F."/>
            <person name="Guigo R."/>
            <person name="Smit A."/>
            <person name="Dubchak I."/>
            <person name="Rubin E.M."/>
            <person name="Couronne O."/>
            <person name="Poliakov A."/>
            <person name="Huebner N."/>
            <person name="Ganten D."/>
            <person name="Goesele C."/>
            <person name="Hummel O."/>
            <person name="Kreitler T."/>
            <person name="Lee Y.-A."/>
            <person name="Monti J."/>
            <person name="Schulz H."/>
            <person name="Zimdahl H."/>
            <person name="Himmelbauer H."/>
            <person name="Lehrach H."/>
            <person name="Jacob H.J."/>
            <person name="Bromberg S."/>
            <person name="Gullings-Handley J."/>
            <person name="Jensen-Seaman M.I."/>
            <person name="Kwitek A.E."/>
            <person name="Lazar J."/>
            <person name="Pasko D."/>
            <person name="Tonellato P.J."/>
            <person name="Twigger S."/>
            <person name="Ponting C.P."/>
            <person name="Duarte J.M."/>
            <person name="Rice S."/>
            <person name="Goodstadt L."/>
            <person name="Beatson S.A."/>
            <person name="Emes R.D."/>
            <person name="Winter E.E."/>
            <person name="Webber C."/>
            <person name="Brandt P."/>
            <person name="Nyakatura G."/>
            <person name="Adetobi M."/>
            <person name="Chiaromonte F."/>
            <person name="Elnitski L."/>
            <person name="Eswara P."/>
            <person name="Hardison R.C."/>
            <person name="Hou M."/>
            <person name="Kolbe D."/>
            <person name="Makova K."/>
            <person name="Miller W."/>
            <person name="Nekrutenko A."/>
            <person name="Riemer C."/>
            <person name="Schwartz S."/>
            <person name="Taylor J."/>
            <person name="Yang S."/>
            <person name="Zhang Y."/>
            <person name="Lindpaintner K."/>
            <person name="Andrews T.D."/>
            <person name="Caccamo M."/>
            <person name="Clamp M."/>
            <person name="Clarke L."/>
            <person name="Curwen V."/>
            <person name="Durbin R.M."/>
            <person name="Eyras E."/>
            <person name="Searle S.M."/>
            <person name="Cooper G.M."/>
            <person name="Batzoglou S."/>
            <person name="Brudno M."/>
            <person name="Sidow A."/>
            <person name="Stone E.A."/>
            <person name="Payseur B.A."/>
            <person name="Bourque G."/>
            <person name="Lopez-Otin C."/>
            <person name="Puente X.S."/>
            <person name="Chakrabarti K."/>
            <person name="Chatterji S."/>
            <person name="Dewey C."/>
            <person name="Pachter L."/>
            <person name="Bray N."/>
            <person name="Yap V.B."/>
            <person name="Caspi A."/>
            <person name="Tesler G."/>
            <person name="Pevzner P.A."/>
            <person name="Haussler D."/>
            <person name="Roskin K.M."/>
            <person name="Baertsch R."/>
            <person name="Clawson H."/>
            <person name="Furey T.S."/>
            <person name="Hinrichs A.S."/>
            <person name="Karolchik D."/>
            <person name="Kent W.J."/>
            <person name="Rosenbloom K.R."/>
            <person name="Trumbower H."/>
            <person name="Weirauch M."/>
            <person name="Cooper D.N."/>
            <person name="Stenson P.D."/>
            <person name="Ma B."/>
            <person name="Brent M."/>
            <person name="Arumugam M."/>
            <person name="Shteynberg D."/>
            <person name="Copley R.R."/>
            <person name="Taylor M.S."/>
            <person name="Riethman H."/>
            <person name="Mudunuri U."/>
            <person name="Peterson J."/>
            <person name="Guyer M."/>
            <person name="Felsenfeld A."/>
            <person name="Old S."/>
            <person name="Mockrin S."/>
            <person name="Collins F.S."/>
        </authorList>
    </citation>
    <scope>NUCLEOTIDE SEQUENCE [LARGE SCALE GENOMIC DNA]</scope>
    <source>
        <strain>Brown Norway</strain>
    </source>
</reference>
<reference key="2">
    <citation type="submission" date="2005-09" db="EMBL/GenBank/DDBJ databases">
        <authorList>
            <person name="Mural R.J."/>
            <person name="Adams M.D."/>
            <person name="Myers E.W."/>
            <person name="Smith H.O."/>
            <person name="Venter J.C."/>
        </authorList>
    </citation>
    <scope>NUCLEOTIDE SEQUENCE [LARGE SCALE GENOMIC DNA]</scope>
    <source>
        <strain>Brown Norway</strain>
    </source>
</reference>
<reference key="3">
    <citation type="journal article" date="2006" name="Mol. Biol. Cell">
        <title>A functional role for the GCC185 golgin in mannose 6-phosphate receptor recycling.</title>
        <authorList>
            <person name="Reddy J.V."/>
            <person name="Burguete A.S."/>
            <person name="Sridevi K."/>
            <person name="Ganley I.G."/>
            <person name="Nottingham R.M."/>
            <person name="Pfeffer S.R."/>
        </authorList>
    </citation>
    <scope>INTERACTION WITH RAB9A</scope>
</reference>
<gene>
    <name type="primary">Gcc2</name>
    <name type="synonym">Gcc185</name>
</gene>
<sequence>MEDSAQDAVTAAPSGTPKSKLETLPREDLIKFAKKQMMLLQKAKARCTELDKEVEELKSKPVDGGTDDMIKVLTERLDALLLEKAETEQQCLCLKKENIKMKQEVEDSVTKLEETQKEFEQSHRNYVREMESVKNELIAVHSEHSKEKAALQRDLEGAVHRQAELLEQLKSQSDSEDNVKKLQEEIQNITAAFEEQTSCLQKQLEATSDEKQQEIIHLQKVIEDNAQHYQKDINTFQEEIVQLRATHKEEVNELMSQMETLAKEHEAAVNKLKENRVTLCETSETIPENYQCESESLNEDTSDASQENQKCSVALQEDPFAEHTVYDKVRQLEDSLKELESQHSILKDEVTYMNNLKLKLEMDAQHIKDEFFHEREDLEFKINELLLAKEEQSYVVEKLKYEREDLNRQLCCTVEQHNKEIQRLQEHHQKEISELSETFMSGSEKEKLALMFEIQGLKEQCENLQHEKQEVVLNYESLREMMEILQTELGESAGKISQEFETMKQQQASDVHELQQKLRTAFNEKDALLETINRLQGENEKLLSQELVSELESTMKNLKADNSMYLASLGQKDTLLQELEAKISSLAEEKDDFISKIKTSREEIDDLHQKWEREQKLSVELREAAEQAAQHNSELRQRVSELTGKLDEILREKSQNDQNIMVQMKTMTEDQEALSSKIKSLYEENNRLHSEKVQLSRDLEALQSQQDFAYKEHVAEFEKKLQLMVEERDDLNKLLENEQLQKSFVKTQLYEFLKQMRPSILEDNEEEDVVTVLKAVGESLVTVKEEKHNLVFEYDARVLELERRIKCLQEESVVQCEELRALVRDSEQEKILLRKELDEVTSTKEALQCDILEMKNTNEKTSLENQTLSTRVEELSRSLHSKNEVHNEKDLVIEHENLRLSLEQRESELQDVRAELMLLKDSLEKSPSVKNDQLSLVKELEEKIESLEKESKDKDEKISKIKLVAVRAKKELDSNRKEAQTLRDELESVQSEKDRLSASMKEFIQGAESYKNLLLEYDKQSEQLDVEKERANNFEHHIEDLTKQLRDSTCQYEKLTSDNEDLLARIETLQANARLLEAQILEVQRAKGVVEKELEAEKLQKEQKIKEHVSTTNELEELQLQFQKEKKQLQKTMQELELVKKDAQQTTLMNMEIADYERLMKELNQKLTNKNSKIEDLEQEMKIQKQKQETLQEEMTSLQSSVQHYEEKNAQIKQLLVKTKKELADAKQAETDHLLLQASLKGELEASQQQVEVYKIQLAEMTSEKHKIHEHLKTSAEQHQRTLSAYQQRVVALQEESRTAKAEQAAVTSEFENYKVRVHNVLKQQKNKSVSQAETEGAKQEREHLEMLIDQLKIKLQDSQNSLQISVSEFQTLQSEHDTLLERHNRMLQETVTKEAELREKLCSAQSENTMLKSEHAQTMCQLTSQNEALRNSFRDQVRHLQDEHRKTVETLQHQLSKVETQLFQLKSEPPTKSPASSHQPSKSLRERRTTDLPLLDMHTVTREEGEGMETTDSESVSSAGTHIQSLEQLLSSPDSKLERLTEASLWHTEFTKEELAEKLSSTTKSADHLNGLLRETEATNAILMEQIKLLKSEIRRLERNQEREKSVANLEYLKNVLLRFIFLKPGSERERLLPVIDTMLQLSPEEKGKLATVAQGEEESASRSSGWASYLHSWSGLR</sequence>
<dbReference type="EMBL" id="AC114045">
    <property type="status" value="NOT_ANNOTATED_CDS"/>
    <property type="molecule type" value="Genomic_DNA"/>
</dbReference>
<dbReference type="EMBL" id="CH474016">
    <property type="protein sequence ID" value="EDL93092.1"/>
    <property type="molecule type" value="Genomic_DNA"/>
</dbReference>
<dbReference type="RefSeq" id="NP_001101103.1">
    <property type="nucleotide sequence ID" value="NM_001107633.2"/>
</dbReference>
<dbReference type="SMR" id="D3ZZL9"/>
<dbReference type="FunCoup" id="D3ZZL9">
    <property type="interactions" value="2073"/>
</dbReference>
<dbReference type="STRING" id="10116.ENSRNOP00000001092"/>
<dbReference type="iPTMnet" id="D3ZZL9"/>
<dbReference type="PhosphoSitePlus" id="D3ZZL9"/>
<dbReference type="SwissPalm" id="D3ZZL9"/>
<dbReference type="jPOST" id="D3ZZL9"/>
<dbReference type="PaxDb" id="10116-ENSRNOP00000001092"/>
<dbReference type="PeptideAtlas" id="D3ZZL9"/>
<dbReference type="GeneID" id="309798"/>
<dbReference type="KEGG" id="rno:309798"/>
<dbReference type="UCSC" id="RGD:1305732">
    <property type="organism name" value="rat"/>
</dbReference>
<dbReference type="AGR" id="RGD:1305732"/>
<dbReference type="CTD" id="9648"/>
<dbReference type="RGD" id="1305732">
    <property type="gene designation" value="Gcc2"/>
</dbReference>
<dbReference type="eggNOG" id="KOG0864">
    <property type="taxonomic scope" value="Eukaryota"/>
</dbReference>
<dbReference type="HOGENOM" id="CLU_002922_0_0_1"/>
<dbReference type="InParanoid" id="D3ZZL9"/>
<dbReference type="PhylomeDB" id="D3ZZL9"/>
<dbReference type="TreeFam" id="TF332907"/>
<dbReference type="Reactome" id="R-RNO-6811440">
    <property type="pathway name" value="Retrograde transport at the Trans-Golgi-Network"/>
</dbReference>
<dbReference type="PRO" id="PR:D3ZZL9"/>
<dbReference type="Proteomes" id="UP000002494">
    <property type="component" value="Unplaced"/>
</dbReference>
<dbReference type="Proteomes" id="UP000234681">
    <property type="component" value="Chromosome 20"/>
</dbReference>
<dbReference type="GO" id="GO:0005829">
    <property type="term" value="C:cytosol"/>
    <property type="evidence" value="ECO:0007669"/>
    <property type="project" value="GOC"/>
</dbReference>
<dbReference type="GO" id="GO:0005794">
    <property type="term" value="C:Golgi apparatus"/>
    <property type="evidence" value="ECO:0000266"/>
    <property type="project" value="RGD"/>
</dbReference>
<dbReference type="GO" id="GO:0016020">
    <property type="term" value="C:membrane"/>
    <property type="evidence" value="ECO:0007669"/>
    <property type="project" value="UniProtKB-KW"/>
</dbReference>
<dbReference type="GO" id="GO:0005802">
    <property type="term" value="C:trans-Golgi network"/>
    <property type="evidence" value="ECO:0000250"/>
    <property type="project" value="UniProtKB"/>
</dbReference>
<dbReference type="GO" id="GO:0042802">
    <property type="term" value="F:identical protein binding"/>
    <property type="evidence" value="ECO:0000266"/>
    <property type="project" value="RGD"/>
</dbReference>
<dbReference type="GO" id="GO:0090161">
    <property type="term" value="P:Golgi ribbon formation"/>
    <property type="evidence" value="ECO:0000250"/>
    <property type="project" value="UniProtKB"/>
</dbReference>
<dbReference type="GO" id="GO:0034499">
    <property type="term" value="P:late endosome to Golgi transport"/>
    <property type="evidence" value="ECO:0000250"/>
    <property type="project" value="UniProtKB"/>
</dbReference>
<dbReference type="GO" id="GO:0034453">
    <property type="term" value="P:microtubule anchoring"/>
    <property type="evidence" value="ECO:0000250"/>
    <property type="project" value="UniProtKB"/>
</dbReference>
<dbReference type="GO" id="GO:0031023">
    <property type="term" value="P:microtubule organizing center organization"/>
    <property type="evidence" value="ECO:0000250"/>
    <property type="project" value="UniProtKB"/>
</dbReference>
<dbReference type="GO" id="GO:0034067">
    <property type="term" value="P:protein localization to Golgi apparatus"/>
    <property type="evidence" value="ECO:0000250"/>
    <property type="project" value="UniProtKB"/>
</dbReference>
<dbReference type="GO" id="GO:0006622">
    <property type="term" value="P:protein targeting to lysosome"/>
    <property type="evidence" value="ECO:0000250"/>
    <property type="project" value="UniProtKB"/>
</dbReference>
<dbReference type="GO" id="GO:0071955">
    <property type="term" value="P:recycling endosome to Golgi transport"/>
    <property type="evidence" value="ECO:0000250"/>
    <property type="project" value="UniProtKB"/>
</dbReference>
<dbReference type="GO" id="GO:0070861">
    <property type="term" value="P:regulation of protein exit from endoplasmic reticulum"/>
    <property type="evidence" value="ECO:0000250"/>
    <property type="project" value="UniProtKB"/>
</dbReference>
<dbReference type="GO" id="GO:0042147">
    <property type="term" value="P:retrograde transport, endosome to Golgi"/>
    <property type="evidence" value="ECO:0000266"/>
    <property type="project" value="RGD"/>
</dbReference>
<dbReference type="FunFam" id="1.10.220.60:FF:000003">
    <property type="entry name" value="GRIP and coiled-coil domain-containing protein 2"/>
    <property type="match status" value="1"/>
</dbReference>
<dbReference type="Gene3D" id="1.10.220.60">
    <property type="entry name" value="GRIP domain"/>
    <property type="match status" value="1"/>
</dbReference>
<dbReference type="InterPro" id="IPR032023">
    <property type="entry name" value="GCC2_Rab_bind"/>
</dbReference>
<dbReference type="InterPro" id="IPR000237">
    <property type="entry name" value="GRIP_dom"/>
</dbReference>
<dbReference type="InterPro" id="IPR051841">
    <property type="entry name" value="MT-Golgi_org_protein"/>
</dbReference>
<dbReference type="PANTHER" id="PTHR18902:SF25">
    <property type="entry name" value="GRIP AND COILED-COIL DOMAIN-CONTAINING PROTEIN 2"/>
    <property type="match status" value="1"/>
</dbReference>
<dbReference type="PANTHER" id="PTHR18902">
    <property type="entry name" value="NUCLEAR MITOTIC APPARATUS PROTEIN 1-RELATED"/>
    <property type="match status" value="1"/>
</dbReference>
<dbReference type="Pfam" id="PF01465">
    <property type="entry name" value="GRIP"/>
    <property type="match status" value="1"/>
</dbReference>
<dbReference type="Pfam" id="PF16704">
    <property type="entry name" value="Rab_bind"/>
    <property type="match status" value="1"/>
</dbReference>
<dbReference type="SMART" id="SM00755">
    <property type="entry name" value="Grip"/>
    <property type="match status" value="1"/>
</dbReference>
<dbReference type="PROSITE" id="PS50913">
    <property type="entry name" value="GRIP"/>
    <property type="match status" value="1"/>
</dbReference>
<feature type="chain" id="PRO_0000401197" description="GRIP and coiled-coil domain-containing protein 2">
    <location>
        <begin position="1"/>
        <end position="1679"/>
    </location>
</feature>
<feature type="domain" description="GRIP" evidence="4">
    <location>
        <begin position="1604"/>
        <end position="1654"/>
    </location>
</feature>
<feature type="region of interest" description="Disordered" evidence="5">
    <location>
        <begin position="1"/>
        <end position="23"/>
    </location>
</feature>
<feature type="region of interest" description="Disordered" evidence="5">
    <location>
        <begin position="1466"/>
        <end position="1522"/>
    </location>
</feature>
<feature type="region of interest" description="Mediates interaction with RAB9A" evidence="1">
    <location>
        <begin position="1569"/>
        <end position="1679"/>
    </location>
</feature>
<feature type="region of interest" description="Mediates interaction with RAB6A" evidence="1">
    <location>
        <begin position="1569"/>
        <end position="1608"/>
    </location>
</feature>
<feature type="coiled-coil region" evidence="3">
    <location>
        <begin position="35"/>
        <end position="1469"/>
    </location>
</feature>
<feature type="compositionally biased region" description="Polar residues" evidence="5">
    <location>
        <begin position="1474"/>
        <end position="1483"/>
    </location>
</feature>
<feature type="modified residue" description="N-acetylmethionine" evidence="2">
    <location>
        <position position="1"/>
    </location>
</feature>
<feature type="modified residue" description="Phosphoserine" evidence="2">
    <location>
        <position position="1474"/>
    </location>
</feature>
<feature type="modified residue" description="Phosphoserine" evidence="2">
    <location>
        <position position="1478"/>
    </location>
</feature>
<proteinExistence type="evidence at protein level"/>
<keyword id="KW-0007">Acetylation</keyword>
<keyword id="KW-0175">Coiled coil</keyword>
<keyword id="KW-0963">Cytoplasm</keyword>
<keyword id="KW-0333">Golgi apparatus</keyword>
<keyword id="KW-0472">Membrane</keyword>
<keyword id="KW-0597">Phosphoprotein</keyword>
<keyword id="KW-0653">Protein transport</keyword>
<keyword id="KW-1185">Reference proteome</keyword>
<keyword id="KW-0813">Transport</keyword>
<protein>
    <recommendedName>
        <fullName>GRIP and coiled-coil domain-containing protein 2</fullName>
    </recommendedName>
    <alternativeName>
        <fullName>185 kDa Golgi coiled-coil protein</fullName>
    </alternativeName>
</protein>
<name>GCC2_RAT</name>